<gene>
    <name evidence="18" type="primary">zfp-1</name>
    <name evidence="18" type="ORF">F54F2.2</name>
</gene>
<protein>
    <recommendedName>
        <fullName evidence="18">Zinc finger protein zfp-1</fullName>
    </recommendedName>
    <alternativeName>
        <fullName evidence="14">Protein AF-10 homolog</fullName>
    </alternativeName>
</protein>
<sequence>MKEMVGGCCVCADENGWTDNPLIYCDGENCEVAVHQGCYGIQEVPEGEWFCAKCTKASAMMPGSINEATFCCQLCPFDYGALKKTDRNGWAHVICALYIPEVRFGNVHSMEPVILNDVPTDKFNKLCYICNEERPNDAKKGACMSCNKSTCKRSFHVTCAQRKGLLCEEGAISRNVKYCGYCENHLKKAINDPAIKVIPACPPVQRLSKEQDKKKTVLLTSLPLPPPAPRLHMLADPLPIKSNKVNNVLGLGSAINAVSLEERPASGSTVNSGIFVPPPTAFSPPLTTSSRSSVAQDPSPPLTINKNSLSSSGPLIPSTAHLSATTASATPIMANGSTLPPSSETTVGTHCLQQLQIQSAAAAAITQNQIGPSELNGYPAASQLSSFMHEIPARNTTSVASLLPPGAAEYHLNGSGDEEKTVKAVLTAPLTKAKRIRDSKNDMMDKTHKRPRANARPPAVLGSMSSGSSGGTVGKSPSMQRLQNLVAPIVSETVTDFQRDRVADRTAAERRAAAAQSQPSTSTNGGPNVTIPAVVEVHTNSTNSTNHQNNGLTQNAPASTSMQAGTSSNDGVISQNGTSSTSQSNRLNLPSFMEQLLERQWDQGSSLLMANAHFDVAQLLSCLFQLKSENFRLEENLSGLRKRRDHLFALNSRLAEVNTLDVSKRQRSDGLLLQQQIAHHLDPTSIVPKAEVHKQEPLSAPTSVPLPANHSSSLFEDIKAPKATYSRKTPSNIPLTVPLSTAATALTTTTAASSGAPVNSNIQNHRATPSTAGAPMAATPIMTAVTSANELAALSPERAQALLNMYRMPLDANVAAQLSMITNFPGQVNPSLFSRLLAVNMMNGGLQPNGQPLSALPPPTSATPNGK</sequence>
<keyword id="KW-0877">Alternative promoter usage</keyword>
<keyword id="KW-0025">Alternative splicing</keyword>
<keyword id="KW-0156">Chromatin regulator</keyword>
<keyword id="KW-0158">Chromosome</keyword>
<keyword id="KW-0238">DNA-binding</keyword>
<keyword id="KW-0479">Metal-binding</keyword>
<keyword id="KW-0539">Nucleus</keyword>
<keyword id="KW-1185">Reference proteome</keyword>
<keyword id="KW-0677">Repeat</keyword>
<keyword id="KW-0804">Transcription</keyword>
<keyword id="KW-0805">Transcription regulation</keyword>
<keyword id="KW-0862">Zinc</keyword>
<keyword id="KW-0863">Zinc-finger</keyword>
<comment type="function">
    <text evidence="4 5 6 7 8 9 11 12">Recruits the histone methyltransferase dot-1.1 to chromatin to methylate 'Lys-79' of histone H3 and activate transcription (PubMed:23806335). Recognizes and binds histone H3 methylated at 'Lys-4' (H3K4me) at the promoters of target genes (PubMed:23263989). During stress, the zfp-1-dot-1.1 complex also plays a role in the deubiquitination of histone H2B sites, which negatively modulates the RNA polymerase II-induced transcription of highly expressed genes (PubMed:23806335). In response to stress, binds to the pdk-1 promoter to negatively regulate pdk-1 expression, which negatively modulates daf-16/FOXO-mediated gene expression (PubMed:21980302). Thus, most likely via this mechanism, in response to stress, it confers a protective role against neuronal necrosis (PubMed:25422944). Plays a role in Insulin/IGF-1-like signaling (IIS)- and diet restriction-mediated lifespan extension by controlling daf-16/FOXO and pha-4/FOXA recruitment to target promoters (PubMed:27039057). May negatively regulate the expression of genes required for vulval development (PubMed:16507136, PubMed:16710447). May play a role in axon guidance in D-type motor neurons (PubMed:24066155). May suppress sensitivity to RNAi (PubMed:16507136).</text>
</comment>
<comment type="function">
    <molecule>Isoform a</molecule>
    <text evidence="10">Required for migration of HSN motor neurons during embryogenesis.</text>
</comment>
<comment type="subunit">
    <text evidence="8">Multimer; in vitro (PubMed:23806335). Interacts (via C-terminus) with dot-1.1 to form a heterodimer known as the zfp-1-dot-1.1 complex or DotCom complex (PubMed:23806335).</text>
</comment>
<comment type="interaction">
    <interactant intactId="EBI-6740300">
        <id>P34447</id>
    </interactant>
    <interactant intactId="EBI-21195283">
        <id>Q6AW06</id>
        <label>dot-1.1</label>
    </interactant>
    <organismsDiffer>false</organismsDiffer>
    <experiments>3</experiments>
</comment>
<comment type="subcellular location">
    <subcellularLocation>
        <location evidence="7 15 17">Nucleus</location>
    </subcellularLocation>
    <subcellularLocation>
        <location evidence="7 17">Chromosome</location>
    </subcellularLocation>
    <text evidence="7 8">Localizes to all six condensed chromosomes (PubMed:23263989). zfp-1 and dot-1.1 colocalize to promoters of highly expressed genes (PubMed:23806335).</text>
</comment>
<comment type="alternative products">
    <event type="alternative promoter"/>
    <event type="alternative splicing"/>
    <isoform>
        <id>P34447-1</id>
        <name evidence="18">a</name>
        <name evidence="13">Long</name>
        <sequence type="displayed"/>
    </isoform>
    <isoform>
        <id>P34447-2</id>
        <name evidence="19">b</name>
        <sequence type="described" ref="VSP_060338 VSP_060339"/>
    </isoform>
    <isoform>
        <id>P34447-3</id>
        <name evidence="20">c</name>
        <name evidence="13">Short</name>
        <sequence type="described" ref="VSP_060337"/>
    </isoform>
</comment>
<comment type="tissue specificity">
    <text evidence="7 12">Isoform a: Expressed at high levels in maturing oocytes, but at low levels in the rest of the germ line (at protein level) (PubMed:23263989). Isoform a: Not expressed in the pharynx, germ line and tail (PubMed:27039057). Isoform c: Not expressed in the germ line (at protein level) (PubMed:23263989). Isoform c: Uniformly expressed (PubMed:27039057).</text>
</comment>
<comment type="developmental stage">
    <text evidence="7">Expressed in somatic cells throughout development (at protein level) (PubMed:23263989). Isoform a: Predominantly expressed in embryos and adults (at protein level) (PubMed:23263989). Isoform c: Abundant at larval stages (at protein level) (PubMed:23263989).</text>
</comment>
<comment type="domain">
    <text evidence="16 17">The PHD-type zinc finger 1 most likely mediates nuclear localization.</text>
</comment>
<comment type="domain">
    <text evidence="16 17">The ePHD2 domain folds as an integrated structural module comprizing the C2HC pre-PHD-type 2 zinc finger and the PHD-type 2 zinc finger. It mediates non-specific binding to dsDNA, but does not bind histones in contrast to many PHD-type zinc fingers.</text>
</comment>
<comment type="disruption phenotype">
    <text evidence="4 5 7 12">RNAi-mediated knockdown results in developmental defects such as slow growth, protruding vulva, and a reduced brood size (PubMed:16710447). RNAi-mediated knockdown results in germ line defects, resulting in no embryos or impaired oogenesis (PubMed:23263989). RNAi-mediated knockdown suppresses the multivulval phenotype of the lin-15A-lin15B n765 mutant (PubMed:16507136, PubMed:16710447). RNAi-mediated knockdown shortens the lifespan of daf-2 e1370 mutants (PubMed:27039057).</text>
</comment>
<evidence type="ECO:0000255" key="1">
    <source>
        <dbReference type="PROSITE-ProRule" id="PRU00146"/>
    </source>
</evidence>
<evidence type="ECO:0000255" key="2">
    <source>
        <dbReference type="PROSITE-ProRule" id="PRU01146"/>
    </source>
</evidence>
<evidence type="ECO:0000256" key="3">
    <source>
        <dbReference type="SAM" id="MobiDB-lite"/>
    </source>
</evidence>
<evidence type="ECO:0000269" key="4">
    <source>
    </source>
</evidence>
<evidence type="ECO:0000269" key="5">
    <source>
    </source>
</evidence>
<evidence type="ECO:0000269" key="6">
    <source>
    </source>
</evidence>
<evidence type="ECO:0000269" key="7">
    <source>
    </source>
</evidence>
<evidence type="ECO:0000269" key="8">
    <source>
    </source>
</evidence>
<evidence type="ECO:0000269" key="9">
    <source>
    </source>
</evidence>
<evidence type="ECO:0000269" key="10">
    <source>
    </source>
</evidence>
<evidence type="ECO:0000269" key="11">
    <source>
    </source>
</evidence>
<evidence type="ECO:0000269" key="12">
    <source>
    </source>
</evidence>
<evidence type="ECO:0000303" key="13">
    <source>
    </source>
</evidence>
<evidence type="ECO:0000305" key="14"/>
<evidence type="ECO:0000305" key="15">
    <source>
    </source>
</evidence>
<evidence type="ECO:0000305" key="16">
    <source>
    </source>
</evidence>
<evidence type="ECO:0000305" key="17">
    <source>
    </source>
</evidence>
<evidence type="ECO:0000312" key="18">
    <source>
        <dbReference type="WormBase" id="F54F2.2a"/>
    </source>
</evidence>
<evidence type="ECO:0000312" key="19">
    <source>
        <dbReference type="WormBase" id="F54F2.2b"/>
    </source>
</evidence>
<evidence type="ECO:0000312" key="20">
    <source>
        <dbReference type="WormBase" id="F54F2.2c"/>
    </source>
</evidence>
<proteinExistence type="evidence at protein level"/>
<organism>
    <name type="scientific">Caenorhabditis elegans</name>
    <dbReference type="NCBI Taxonomy" id="6239"/>
    <lineage>
        <taxon>Eukaryota</taxon>
        <taxon>Metazoa</taxon>
        <taxon>Ecdysozoa</taxon>
        <taxon>Nematoda</taxon>
        <taxon>Chromadorea</taxon>
        <taxon>Rhabditida</taxon>
        <taxon>Rhabditina</taxon>
        <taxon>Rhabditomorpha</taxon>
        <taxon>Rhabditoidea</taxon>
        <taxon>Rhabditidae</taxon>
        <taxon>Peloderinae</taxon>
        <taxon>Caenorhabditis</taxon>
    </lineage>
</organism>
<accession>P34447</accession>
<accession>G8JYB8</accession>
<accession>P34448</accession>
<accession>P34449</accession>
<feature type="chain" id="PRO_0000065361" description="Zinc finger protein zfp-1">
    <location>
        <begin position="1"/>
        <end position="867"/>
    </location>
</feature>
<feature type="zinc finger region" description="PHD-type 1" evidence="1">
    <location>
        <begin position="5"/>
        <end position="57"/>
    </location>
</feature>
<feature type="zinc finger region" description="C2HC pre-PHD-type 2" evidence="2">
    <location>
        <begin position="69"/>
        <end position="102"/>
    </location>
</feature>
<feature type="zinc finger region" description="PHD-type 2" evidence="2">
    <location>
        <begin position="125"/>
        <end position="186"/>
    </location>
</feature>
<feature type="region of interest" description="Extended PHD2 domain (ePHD2)" evidence="2">
    <location>
        <begin position="69"/>
        <end position="186"/>
    </location>
</feature>
<feature type="region of interest" description="Disordered" evidence="3">
    <location>
        <begin position="267"/>
        <end position="311"/>
    </location>
</feature>
<feature type="region of interest" description="Disordered" evidence="3">
    <location>
        <begin position="440"/>
        <end position="477"/>
    </location>
</feature>
<feature type="region of interest" description="Disordered" evidence="3">
    <location>
        <begin position="503"/>
        <end position="586"/>
    </location>
</feature>
<feature type="region of interest" description="Disordered" evidence="3">
    <location>
        <begin position="753"/>
        <end position="773"/>
    </location>
</feature>
<feature type="compositionally biased region" description="Polar residues" evidence="3">
    <location>
        <begin position="285"/>
        <end position="311"/>
    </location>
</feature>
<feature type="compositionally biased region" description="Basic and acidic residues" evidence="3">
    <location>
        <begin position="503"/>
        <end position="512"/>
    </location>
</feature>
<feature type="compositionally biased region" description="Polar residues" evidence="3">
    <location>
        <begin position="516"/>
        <end position="527"/>
    </location>
</feature>
<feature type="compositionally biased region" description="Low complexity" evidence="3">
    <location>
        <begin position="538"/>
        <end position="550"/>
    </location>
</feature>
<feature type="compositionally biased region" description="Polar residues" evidence="3">
    <location>
        <begin position="551"/>
        <end position="573"/>
    </location>
</feature>
<feature type="compositionally biased region" description="Low complexity" evidence="3">
    <location>
        <begin position="574"/>
        <end position="585"/>
    </location>
</feature>
<feature type="compositionally biased region" description="Polar residues" evidence="3">
    <location>
        <begin position="758"/>
        <end position="771"/>
    </location>
</feature>
<feature type="site" description="Required for binding to histone H3 methylated at 'Lys-4' in vitro" evidence="7">
    <location>
        <position position="4"/>
    </location>
</feature>
<feature type="splice variant" id="VSP_060337" description="In isoform c." evidence="14">
    <location>
        <begin position="1"/>
        <end position="232"/>
    </location>
</feature>
<feature type="splice variant" id="VSP_060338" description="In isoform b." evidence="14">
    <original>MKEMVGGCCVCADENGWTDNPLIYCDGENCEVAVHQGCYGIQEVPEGEWFCAKCTKASAMMPGSINEATFCCQLCPFDYGALKKTDRNGWAHVICALYIPEVRFGNVHSMEPVILNDVPTDKFNKLCYICNEERPNDAKKGACMSCNKSTCKRSFHVTCAQRKGLLCEEGAISRNVKYCGYCENHLKKAINDPAIKVIPACPPVQRLSKEQ</original>
    <variation>MGKRSVSMFLIDISLFLLLGTLIVACTVKKEKIKERHNHNRTLLKRTVGGKRKDTGHRHRTSTIPPRDKSSLHAPTVKNGNSLSAVEPNGRIKIGYRLSPSVKKGEIVAPKATVTPAVNTRKPINEAISEGIILDPTYFKNGGNLDSKSPKNQKLAEELQQFIDNPGLGSNETSTLTDDNDVPRVVAVPSQCKMFETTNQPTNSQLLLNSE</variation>
    <location>
        <begin position="1"/>
        <end position="211"/>
    </location>
</feature>
<feature type="splice variant" id="VSP_060339" description="In isoform b." evidence="14">
    <location>
        <begin position="212"/>
        <end position="867"/>
    </location>
</feature>
<feature type="mutagenesis site" description="Preferentially binds to the unmethylated 'Lys 4' residue of histone H3." evidence="7">
    <original>M</original>
    <variation>D</variation>
    <location>
        <position position="4"/>
    </location>
</feature>
<feature type="mutagenesis site" description="In op481; defects in axon guidance in D-type motor neurons in a sdn-1 (zh20) mutant background." evidence="9">
    <location>
        <begin position="601"/>
        <end position="867"/>
    </location>
</feature>
<name>ZFP1_CAEEL</name>
<reference key="1">
    <citation type="journal article" date="1994" name="Nature">
        <title>2.2 Mb of contiguous nucleotide sequence from chromosome III of C. elegans.</title>
        <authorList>
            <person name="Wilson R."/>
            <person name="Ainscough R."/>
            <person name="Anderson K."/>
            <person name="Baynes C."/>
            <person name="Berks M."/>
            <person name="Bonfield J."/>
            <person name="Burton J."/>
            <person name="Connell M."/>
            <person name="Copsey T."/>
            <person name="Cooper J."/>
            <person name="Coulson A."/>
            <person name="Craxton M."/>
            <person name="Dear S."/>
            <person name="Du Z."/>
            <person name="Durbin R."/>
            <person name="Favello A."/>
            <person name="Fraser A."/>
            <person name="Fulton L."/>
            <person name="Gardner A."/>
            <person name="Green P."/>
            <person name="Hawkins T."/>
            <person name="Hillier L."/>
            <person name="Jier M."/>
            <person name="Johnston L."/>
            <person name="Jones M."/>
            <person name="Kershaw J."/>
            <person name="Kirsten J."/>
            <person name="Laisster N."/>
            <person name="Latreille P."/>
            <person name="Lightning J."/>
            <person name="Lloyd C."/>
            <person name="Mortimore B."/>
            <person name="O'Callaghan M."/>
            <person name="Parsons J."/>
            <person name="Percy C."/>
            <person name="Rifken L."/>
            <person name="Roopra A."/>
            <person name="Saunders D."/>
            <person name="Shownkeen R."/>
            <person name="Sims M."/>
            <person name="Smaldon N."/>
            <person name="Smith A."/>
            <person name="Smith M."/>
            <person name="Sonnhammer E."/>
            <person name="Staden R."/>
            <person name="Sulston J."/>
            <person name="Thierry-Mieg J."/>
            <person name="Thomas K."/>
            <person name="Vaudin M."/>
            <person name="Vaughan K."/>
            <person name="Waterston R."/>
            <person name="Watson A."/>
            <person name="Weinstock L."/>
            <person name="Wilkinson-Sproat J."/>
            <person name="Wohldman P."/>
        </authorList>
    </citation>
    <scope>NUCLEOTIDE SEQUENCE [LARGE SCALE GENOMIC DNA]</scope>
    <source>
        <strain>Bristol N2</strain>
    </source>
</reference>
<reference key="2">
    <citation type="journal article" date="1998" name="Science">
        <title>Genome sequence of the nematode C. elegans: a platform for investigating biology.</title>
        <authorList>
            <consortium name="The C. elegans sequencing consortium"/>
        </authorList>
    </citation>
    <scope>NUCLEOTIDE SEQUENCE [LARGE SCALE GENOMIC DNA]</scope>
    <source>
        <strain>Bristol N2</strain>
    </source>
</reference>
<reference key="3">
    <citation type="journal article" date="2006" name="Genome Biol.">
        <title>Loss of LIN-35, the Caenorhabditis elegans ortholog of the tumor suppressor p105Rb, results in enhanced RNA interference.</title>
        <authorList>
            <person name="Lehner B."/>
            <person name="Calixto A."/>
            <person name="Crombie C."/>
            <person name="Tischler J."/>
            <person name="Fortunato A."/>
            <person name="Chalfie M."/>
            <person name="Fraser A.G."/>
        </authorList>
    </citation>
    <scope>FUNCTION</scope>
    <scope>DISRUPTION PHENOTYPE</scope>
</reference>
<reference key="4">
    <citation type="journal article" date="2006" name="PLoS Genet.">
        <title>Diverse chromatin remodeling genes antagonize the Rb-involved SynMuv pathways in C. elegans.</title>
        <authorList>
            <person name="Cui M."/>
            <person name="Kim E.B."/>
            <person name="Han M."/>
        </authorList>
    </citation>
    <scope>FUNCTION</scope>
    <scope>DISRUPTION PHENOTYPE</scope>
</reference>
<reference key="5">
    <citation type="journal article" date="2011" name="PLoS Genet.">
        <title>A conserved PHD finger protein and endogenous RNAi modulate insulin signaling in Caenorhabditis elegans.</title>
        <authorList>
            <person name="Mansisidor A.R."/>
            <person name="Cecere G."/>
            <person name="Hoersch S."/>
            <person name="Jensen M.B."/>
            <person name="Kawli T."/>
            <person name="Kennedy L.M."/>
            <person name="Chavez V."/>
            <person name="Tan M.W."/>
            <person name="Lieb J.D."/>
            <person name="Grishok A."/>
        </authorList>
    </citation>
    <scope>FUNCTION</scope>
    <scope>SUBCELLULAR LOCATION</scope>
</reference>
<reference key="6">
    <citation type="journal article" date="2013" name="Mol. Cell">
        <title>The ZFP-1(AF10)/DOT-1 complex opposes H2B ubiquitination to reduce Pol II transcription.</title>
        <authorList>
            <person name="Cecere G."/>
            <person name="Hoersch S."/>
            <person name="Jensen M.B."/>
            <person name="Dixit S."/>
            <person name="Grishok A."/>
        </authorList>
    </citation>
    <scope>FUNCTION</scope>
    <scope>SUBUNIT</scope>
    <scope>INTERACTION WITH DOT-1.1</scope>
    <scope>SUBCELLULAR LOCATION</scope>
    <scope>DOMAIN</scope>
</reference>
<reference key="7">
    <citation type="journal article" date="2013" name="Mol. Cell. Biol.">
        <title>The conserved PHD1-PHD2 domain of ZFP-1/AF10 is a discrete functional module essential for viability in Caenorhabditis elegans.</title>
        <authorList>
            <person name="Avgousti D.C."/>
            <person name="Cecere G."/>
            <person name="Grishok A."/>
        </authorList>
    </citation>
    <scope>FUNCTION</scope>
    <scope>SUBCELLULAR LOCATION</scope>
    <scope>TISSUE SPECIFICITY (ISOFORMS A AND C)</scope>
    <scope>DEVELOPMENTAL STAGE (ISOFORMS A AND C)</scope>
    <scope>DOMAIN</scope>
    <scope>DISRUPTION PHENOTYPE</scope>
    <scope>MUTAGENESIS OF MET-4</scope>
</reference>
<reference key="8">
    <citation type="journal article" date="2013" name="PLoS ONE">
        <title>A network of HSPG core proteins and HS modifying enzymes regulates netrin-dependent guidance of D-type motor neurons in Caenorhabditis elegans.</title>
        <authorList>
            <person name="Gysi S."/>
            <person name="Rhiner C."/>
            <person name="Flibotte S."/>
            <person name="Moerman D.G."/>
            <person name="Hengartner M.O."/>
        </authorList>
    </citation>
    <scope>FUNCTION</scope>
    <scope>MUTAGENESIS OF 601-TRP--LYS-867</scope>
</reference>
<reference key="9">
    <citation type="journal article" date="2014" name="Genetics">
        <title>Neuronal migration is regulated by endogenous RNAi and chromatin-binding factor ZFP-1/AF10 in Caenorhabditis elegans.</title>
        <authorList>
            <person name="Kennedy L.M."/>
            <person name="Grishok A."/>
        </authorList>
    </citation>
    <scope>FUNCTION (ISOFORM A)</scope>
</reference>
<reference key="10">
    <citation type="journal article" date="2014" name="PLoS ONE">
        <title>The insulin/IGF signaling regulators cytohesin/GRP-1 and PIP5K/PPK-1 modulate susceptibility to excitotoxicity in C. elegans.</title>
        <authorList>
            <person name="Tehrani N."/>
            <person name="Del Rosario J."/>
            <person name="Dominguez M."/>
            <person name="Kalb R."/>
            <person name="Mano I."/>
        </authorList>
    </citation>
    <scope>FUNCTION</scope>
</reference>
<reference key="11">
    <citation type="journal article" date="2016" name="Aging Cell">
        <title>A chromatin modifier integrates insulin/IGF-1 signalling and dietary restriction to regulate longevity.</title>
        <authorList>
            <person name="Singh A."/>
            <person name="Kumar N."/>
            <person name="Matai L."/>
            <person name="Jain V."/>
            <person name="Garg A."/>
            <person name="Mukhopadhyay A."/>
        </authorList>
    </citation>
    <scope>FUNCTION</scope>
    <scope>TISSUE SPECIFICITY (ISOFORMS A AND C)</scope>
    <scope>DISRUPTION PHENOTYPE</scope>
</reference>
<dbReference type="EMBL" id="BX284603">
    <property type="protein sequence ID" value="CCD71235.1"/>
    <property type="molecule type" value="Genomic_DNA"/>
</dbReference>
<dbReference type="EMBL" id="BX284603">
    <property type="protein sequence ID" value="CCD71236.1"/>
    <property type="molecule type" value="Genomic_DNA"/>
</dbReference>
<dbReference type="EMBL" id="BX284603">
    <property type="protein sequence ID" value="CCD71237.1"/>
    <property type="molecule type" value="Genomic_DNA"/>
</dbReference>
<dbReference type="PIR" id="S44827">
    <property type="entry name" value="S44827"/>
</dbReference>
<dbReference type="PIR" id="S44829">
    <property type="entry name" value="S44829"/>
</dbReference>
<dbReference type="RefSeq" id="NP_001022610.1">
    <molecule id="P34447-2"/>
    <property type="nucleotide sequence ID" value="NM_001027439.2"/>
</dbReference>
<dbReference type="RefSeq" id="NP_001022611.1">
    <property type="nucleotide sequence ID" value="NM_001027440.3"/>
</dbReference>
<dbReference type="RefSeq" id="NP_001370728.1">
    <molecule id="P34447-3"/>
    <property type="nucleotide sequence ID" value="NM_001382948.2"/>
</dbReference>
<dbReference type="RefSeq" id="NP_001379957.1">
    <molecule id="P34447-1"/>
    <property type="nucleotide sequence ID" value="NM_001392166.1"/>
</dbReference>
<dbReference type="RefSeq" id="NP_498943.2">
    <property type="nucleotide sequence ID" value="NM_066542.7"/>
</dbReference>
<dbReference type="SMR" id="P34447"/>
<dbReference type="BioGRID" id="41439">
    <property type="interactions" value="26"/>
</dbReference>
<dbReference type="ComplexPortal" id="CPX-4127">
    <property type="entry name" value="ZFP-1(AF10)/DOT-1 complex"/>
</dbReference>
<dbReference type="FunCoup" id="P34447">
    <property type="interactions" value="1917"/>
</dbReference>
<dbReference type="IntAct" id="P34447">
    <property type="interactions" value="14"/>
</dbReference>
<dbReference type="STRING" id="6239.F54F2.2a.2"/>
<dbReference type="iPTMnet" id="P34447"/>
<dbReference type="PaxDb" id="6239-F54F2.2a.2"/>
<dbReference type="PeptideAtlas" id="P34447"/>
<dbReference type="EnsemblMetazoa" id="F54F2.2a.1">
    <molecule id="P34447-1"/>
    <property type="protein sequence ID" value="F54F2.2a.1"/>
    <property type="gene ID" value="WBGene00006975"/>
</dbReference>
<dbReference type="EnsemblMetazoa" id="F54F2.2a.2">
    <molecule id="P34447-1"/>
    <property type="protein sequence ID" value="F54F2.2a.2"/>
    <property type="gene ID" value="WBGene00006975"/>
</dbReference>
<dbReference type="EnsemblMetazoa" id="F54F2.2a.3">
    <molecule id="P34447-1"/>
    <property type="protein sequence ID" value="F54F2.2a.3"/>
    <property type="gene ID" value="WBGene00006975"/>
</dbReference>
<dbReference type="EnsemblMetazoa" id="F54F2.2a.4">
    <molecule id="P34447-1"/>
    <property type="protein sequence ID" value="F54F2.2a.4"/>
    <property type="gene ID" value="WBGene00006975"/>
</dbReference>
<dbReference type="EnsemblMetazoa" id="F54F2.2a.5">
    <molecule id="P34447-1"/>
    <property type="protein sequence ID" value="F54F2.2a.5"/>
    <property type="gene ID" value="WBGene00006975"/>
</dbReference>
<dbReference type="EnsemblMetazoa" id="F54F2.2a.6">
    <molecule id="P34447-1"/>
    <property type="protein sequence ID" value="F54F2.2a.6"/>
    <property type="gene ID" value="WBGene00006975"/>
</dbReference>
<dbReference type="EnsemblMetazoa" id="F54F2.2a.7">
    <molecule id="P34447-1"/>
    <property type="protein sequence ID" value="F54F2.2a.7"/>
    <property type="gene ID" value="WBGene00006975"/>
</dbReference>
<dbReference type="EnsemblMetazoa" id="F54F2.2b.1">
    <molecule id="P34447-2"/>
    <property type="protein sequence ID" value="F54F2.2b.1"/>
    <property type="gene ID" value="WBGene00006975"/>
</dbReference>
<dbReference type="EnsemblMetazoa" id="F54F2.2c.1">
    <molecule id="P34447-3"/>
    <property type="protein sequence ID" value="F54F2.2c.1"/>
    <property type="gene ID" value="WBGene00006975"/>
</dbReference>
<dbReference type="EnsemblMetazoa" id="F54F2.2c.2">
    <molecule id="P34447-3"/>
    <property type="protein sequence ID" value="F54F2.2c.2"/>
    <property type="gene ID" value="WBGene00006975"/>
</dbReference>
<dbReference type="GeneID" id="176237"/>
<dbReference type="KEGG" id="cel:CELE_F54F2.2"/>
<dbReference type="AGR" id="WB:WBGene00006975"/>
<dbReference type="CTD" id="176237"/>
<dbReference type="WormBase" id="F54F2.2a">
    <molecule id="P34447-1"/>
    <property type="protein sequence ID" value="CE25003"/>
    <property type="gene ID" value="WBGene00006975"/>
    <property type="gene designation" value="zfp-1"/>
</dbReference>
<dbReference type="WormBase" id="F54F2.2b">
    <molecule id="P34447-2"/>
    <property type="protein sequence ID" value="CE26933"/>
    <property type="gene ID" value="WBGene00006975"/>
    <property type="gene designation" value="zfp-1"/>
</dbReference>
<dbReference type="WormBase" id="F54F2.2c">
    <molecule id="P34447-3"/>
    <property type="protein sequence ID" value="CE33653"/>
    <property type="gene ID" value="WBGene00006975"/>
    <property type="gene designation" value="zfp-1"/>
</dbReference>
<dbReference type="eggNOG" id="KOG0956">
    <property type="taxonomic scope" value="Eukaryota"/>
</dbReference>
<dbReference type="GeneTree" id="ENSGT00940000174200"/>
<dbReference type="HOGENOM" id="CLU_014639_0_0_1"/>
<dbReference type="InParanoid" id="P34447"/>
<dbReference type="OMA" id="YQHRGSL"/>
<dbReference type="OrthoDB" id="20839at2759"/>
<dbReference type="PhylomeDB" id="P34447"/>
<dbReference type="PRO" id="PR:P34447"/>
<dbReference type="Proteomes" id="UP000001940">
    <property type="component" value="Chromosome III"/>
</dbReference>
<dbReference type="Bgee" id="WBGene00006975">
    <property type="expression patterns" value="Expressed in pharyngeal muscle cell (C elegans) and 4 other cell types or tissues"/>
</dbReference>
<dbReference type="GO" id="GO:0000785">
    <property type="term" value="C:chromatin"/>
    <property type="evidence" value="ECO:0000250"/>
    <property type="project" value="WormBase"/>
</dbReference>
<dbReference type="GO" id="GO:0005694">
    <property type="term" value="C:chromosome"/>
    <property type="evidence" value="ECO:0000303"/>
    <property type="project" value="ComplexPortal"/>
</dbReference>
<dbReference type="GO" id="GO:0000793">
    <property type="term" value="C:condensed chromosome"/>
    <property type="evidence" value="ECO:0000314"/>
    <property type="project" value="WormBase"/>
</dbReference>
<dbReference type="GO" id="GO:0035097">
    <property type="term" value="C:histone methyltransferase complex"/>
    <property type="evidence" value="ECO:0000314"/>
    <property type="project" value="ComplexPortal"/>
</dbReference>
<dbReference type="GO" id="GO:0070776">
    <property type="term" value="C:MOZ/MORF histone acetyltransferase complex"/>
    <property type="evidence" value="ECO:0000318"/>
    <property type="project" value="GO_Central"/>
</dbReference>
<dbReference type="GO" id="GO:0005634">
    <property type="term" value="C:nucleus"/>
    <property type="evidence" value="ECO:0000314"/>
    <property type="project" value="WormBase"/>
</dbReference>
<dbReference type="GO" id="GO:0003682">
    <property type="term" value="F:chromatin binding"/>
    <property type="evidence" value="ECO:0000314"/>
    <property type="project" value="WormBase"/>
</dbReference>
<dbReference type="GO" id="GO:0003677">
    <property type="term" value="F:DNA binding"/>
    <property type="evidence" value="ECO:0007669"/>
    <property type="project" value="UniProtKB-KW"/>
</dbReference>
<dbReference type="GO" id="GO:0035064">
    <property type="term" value="F:methylated histone binding"/>
    <property type="evidence" value="ECO:0000314"/>
    <property type="project" value="WormBase"/>
</dbReference>
<dbReference type="GO" id="GO:0008270">
    <property type="term" value="F:zinc ion binding"/>
    <property type="evidence" value="ECO:0007669"/>
    <property type="project" value="UniProtKB-KW"/>
</dbReference>
<dbReference type="GO" id="GO:0006325">
    <property type="term" value="P:chromatin organization"/>
    <property type="evidence" value="ECO:0007669"/>
    <property type="project" value="UniProtKB-KW"/>
</dbReference>
<dbReference type="GO" id="GO:0006357">
    <property type="term" value="P:regulation of transcription by RNA polymerase II"/>
    <property type="evidence" value="ECO:0000318"/>
    <property type="project" value="GO_Central"/>
</dbReference>
<dbReference type="GO" id="GO:0035194">
    <property type="term" value="P:regulatory ncRNA-mediated post-transcriptional gene silencing"/>
    <property type="evidence" value="ECO:0000315"/>
    <property type="project" value="WormBase"/>
</dbReference>
<dbReference type="CDD" id="cd20901">
    <property type="entry name" value="CC_AF10"/>
    <property type="match status" value="1"/>
</dbReference>
<dbReference type="CDD" id="cd15672">
    <property type="entry name" value="ePHD_AF10_like"/>
    <property type="match status" value="1"/>
</dbReference>
<dbReference type="CDD" id="cd15574">
    <property type="entry name" value="PHD_AF10_AF17"/>
    <property type="match status" value="1"/>
</dbReference>
<dbReference type="Gene3D" id="3.30.40.10">
    <property type="entry name" value="Zinc/RING finger domain, C3HC4 (zinc finger)"/>
    <property type="match status" value="2"/>
</dbReference>
<dbReference type="InterPro" id="IPR049773">
    <property type="entry name" value="AF10-like_CC"/>
</dbReference>
<dbReference type="InterPro" id="IPR049781">
    <property type="entry name" value="AF10/AF17_PHD"/>
</dbReference>
<dbReference type="InterPro" id="IPR034732">
    <property type="entry name" value="EPHD"/>
</dbReference>
<dbReference type="InterPro" id="IPR050701">
    <property type="entry name" value="Histone_Mod_Regulator"/>
</dbReference>
<dbReference type="InterPro" id="IPR011011">
    <property type="entry name" value="Znf_FYVE_PHD"/>
</dbReference>
<dbReference type="InterPro" id="IPR001965">
    <property type="entry name" value="Znf_PHD"/>
</dbReference>
<dbReference type="InterPro" id="IPR019787">
    <property type="entry name" value="Znf_PHD-finger"/>
</dbReference>
<dbReference type="InterPro" id="IPR013083">
    <property type="entry name" value="Znf_RING/FYVE/PHD"/>
</dbReference>
<dbReference type="PANTHER" id="PTHR13793">
    <property type="entry name" value="PHD FINGER PROTEINS"/>
    <property type="match status" value="1"/>
</dbReference>
<dbReference type="PANTHER" id="PTHR13793:SF155">
    <property type="entry name" value="ZINC FINGER PROTEIN ZFP-1"/>
    <property type="match status" value="1"/>
</dbReference>
<dbReference type="Pfam" id="PF13831">
    <property type="entry name" value="PHD_2"/>
    <property type="match status" value="1"/>
</dbReference>
<dbReference type="Pfam" id="PF13832">
    <property type="entry name" value="zf-HC5HC2H_2"/>
    <property type="match status" value="1"/>
</dbReference>
<dbReference type="SMART" id="SM00249">
    <property type="entry name" value="PHD"/>
    <property type="match status" value="2"/>
</dbReference>
<dbReference type="SUPFAM" id="SSF57903">
    <property type="entry name" value="FYVE/PHD zinc finger"/>
    <property type="match status" value="1"/>
</dbReference>
<dbReference type="PROSITE" id="PS51805">
    <property type="entry name" value="EPHD"/>
    <property type="match status" value="1"/>
</dbReference>
<dbReference type="PROSITE" id="PS01359">
    <property type="entry name" value="ZF_PHD_1"/>
    <property type="match status" value="1"/>
</dbReference>
<dbReference type="PROSITE" id="PS50016">
    <property type="entry name" value="ZF_PHD_2"/>
    <property type="match status" value="1"/>
</dbReference>